<name>TM87B_MOUSE</name>
<keyword id="KW-0025">Alternative splicing</keyword>
<keyword id="KW-0325">Glycoprotein</keyword>
<keyword id="KW-0333">Golgi apparatus</keyword>
<keyword id="KW-0472">Membrane</keyword>
<keyword id="KW-0597">Phosphoprotein</keyword>
<keyword id="KW-1185">Reference proteome</keyword>
<keyword id="KW-0732">Signal</keyword>
<keyword id="KW-0812">Transmembrane</keyword>
<keyword id="KW-1133">Transmembrane helix</keyword>
<protein>
    <recommendedName>
        <fullName evidence="4">Transmembrane protein 87B</fullName>
    </recommendedName>
</protein>
<feature type="signal peptide" evidence="2">
    <location>
        <begin position="1"/>
        <end position="42"/>
    </location>
</feature>
<feature type="chain" id="PRO_0000291754" description="Transmembrane protein 87B">
    <location>
        <begin position="43"/>
        <end position="555"/>
    </location>
</feature>
<feature type="topological domain" description="Lumenal" evidence="4">
    <location>
        <begin position="43"/>
        <end position="216"/>
    </location>
</feature>
<feature type="transmembrane region" description="Helical; Name=1" evidence="2">
    <location>
        <begin position="217"/>
        <end position="237"/>
    </location>
</feature>
<feature type="topological domain" description="Cytoplasmic" evidence="4">
    <location>
        <begin position="238"/>
        <end position="248"/>
    </location>
</feature>
<feature type="transmembrane region" description="Helical; Name=2" evidence="2">
    <location>
        <begin position="249"/>
        <end position="269"/>
    </location>
</feature>
<feature type="topological domain" description="Lumenal" evidence="4">
    <location>
        <begin position="270"/>
        <end position="300"/>
    </location>
</feature>
<feature type="transmembrane region" description="Helical; Name=3" evidence="2">
    <location>
        <begin position="301"/>
        <end position="321"/>
    </location>
</feature>
<feature type="topological domain" description="Cytoplasmic" evidence="4">
    <location>
        <begin position="322"/>
        <end position="323"/>
    </location>
</feature>
<feature type="transmembrane region" description="Helical; Name=4" evidence="2">
    <location>
        <begin position="324"/>
        <end position="344"/>
    </location>
</feature>
<feature type="topological domain" description="Lumenal" evidence="4">
    <location>
        <begin position="345"/>
        <end position="351"/>
    </location>
</feature>
<feature type="transmembrane region" description="Helical; Name=5" evidence="2">
    <location>
        <begin position="352"/>
        <end position="372"/>
    </location>
</feature>
<feature type="topological domain" description="Cytoplasmic" evidence="4">
    <location>
        <begin position="373"/>
        <end position="394"/>
    </location>
</feature>
<feature type="transmembrane region" description="Helical; Name=6" evidence="2">
    <location>
        <begin position="395"/>
        <end position="415"/>
    </location>
</feature>
<feature type="topological domain" description="Lumenal" evidence="4">
    <location>
        <begin position="416"/>
        <end position="429"/>
    </location>
</feature>
<feature type="transmembrane region" description="Helical; Name=7" evidence="2">
    <location>
        <begin position="430"/>
        <end position="450"/>
    </location>
</feature>
<feature type="topological domain" description="Cytoplasmic" evidence="4">
    <location>
        <begin position="451"/>
        <end position="555"/>
    </location>
</feature>
<feature type="modified residue" description="Phosphoserine" evidence="1">
    <location>
        <position position="470"/>
    </location>
</feature>
<feature type="modified residue" description="Phosphoserine" evidence="1">
    <location>
        <position position="497"/>
    </location>
</feature>
<feature type="modified residue" description="Phosphoserine" evidence="1">
    <location>
        <position position="534"/>
    </location>
</feature>
<feature type="glycosylation site" description="N-linked (GlcNAc...) asparagine" evidence="2">
    <location>
        <position position="68"/>
    </location>
</feature>
<feature type="glycosylation site" description="N-linked (GlcNAc...) asparagine" evidence="2">
    <location>
        <position position="160"/>
    </location>
</feature>
<feature type="glycosylation site" description="N-linked (GlcNAc...) asparagine" evidence="2">
    <location>
        <position position="198"/>
    </location>
</feature>
<feature type="glycosylation site" description="N-linked (GlcNAc...) asparagine" evidence="2">
    <location>
        <position position="275"/>
    </location>
</feature>
<feature type="splice variant" id="VSP_026220" description="In isoform 2." evidence="3">
    <location>
        <begin position="1"/>
        <end position="65"/>
    </location>
</feature>
<feature type="splice variant" id="VSP_026221" description="In isoform 3." evidence="3">
    <original>FIS</original>
    <variation>SFTMSFQNSWC</variation>
    <location>
        <begin position="371"/>
        <end position="373"/>
    </location>
</feature>
<feature type="sequence conflict" description="In Ref. 1; BAB27940." evidence="4" ref="1">
    <original>L</original>
    <variation>A</variation>
    <location>
        <position position="15"/>
    </location>
</feature>
<feature type="sequence conflict" description="In Ref. 1; BAE42677/BAE43092." evidence="4" ref="1">
    <original>H</original>
    <variation>L</variation>
    <location>
        <position position="92"/>
    </location>
</feature>
<feature type="sequence conflict" description="In Ref. 1; BAB27940." evidence="4" ref="1">
    <original>V</original>
    <variation>G</variation>
    <location>
        <position position="223"/>
    </location>
</feature>
<feature type="sequence conflict" description="In Ref. 1; BAB27940." evidence="4" ref="1">
    <original>V</original>
    <variation>I</variation>
    <location>
        <position position="266"/>
    </location>
</feature>
<feature type="sequence conflict" description="In Ref. 1; BAE42677/BAE43092." evidence="4" ref="1">
    <original>I</original>
    <variation>R</variation>
    <location>
        <position position="291"/>
    </location>
</feature>
<feature type="sequence conflict" description="In Ref. 1; BAB27940." evidence="4" ref="1">
    <original>Q</original>
    <variation>E</variation>
    <location>
        <position position="376"/>
    </location>
</feature>
<accession>Q8BKU8</accession>
<accession>A2AN76</accession>
<accession>Q3T9D2</accession>
<accession>Q8K0G0</accession>
<accession>Q9D001</accession>
<gene>
    <name evidence="5" type="primary">Tmem87b</name>
</gene>
<dbReference type="EMBL" id="AK011959">
    <property type="protein sequence ID" value="BAB27940.1"/>
    <property type="status" value="ALT_FRAME"/>
    <property type="molecule type" value="mRNA"/>
</dbReference>
<dbReference type="EMBL" id="AK050203">
    <property type="protein sequence ID" value="BAC34120.1"/>
    <property type="molecule type" value="mRNA"/>
</dbReference>
<dbReference type="EMBL" id="AK171811">
    <property type="protein sequence ID" value="BAE42677.1"/>
    <property type="molecule type" value="mRNA"/>
</dbReference>
<dbReference type="EMBL" id="AK172611">
    <property type="protein sequence ID" value="BAE43092.1"/>
    <property type="molecule type" value="mRNA"/>
</dbReference>
<dbReference type="EMBL" id="AL808104">
    <property type="status" value="NOT_ANNOTATED_CDS"/>
    <property type="molecule type" value="Genomic_DNA"/>
</dbReference>
<dbReference type="EMBL" id="BC031488">
    <property type="protein sequence ID" value="AAH31488.2"/>
    <property type="molecule type" value="mRNA"/>
</dbReference>
<dbReference type="CCDS" id="CCDS38234.1">
    <molecule id="Q8BKU8-1"/>
</dbReference>
<dbReference type="RefSeq" id="NP_001342557.1">
    <molecule id="Q8BKU8-3"/>
    <property type="nucleotide sequence ID" value="NM_001355628.1"/>
</dbReference>
<dbReference type="RefSeq" id="NP_082524.2">
    <molecule id="Q8BKU8-1"/>
    <property type="nucleotide sequence ID" value="NM_028248.2"/>
</dbReference>
<dbReference type="RefSeq" id="XP_011238093.1">
    <property type="nucleotide sequence ID" value="XM_011239791.2"/>
</dbReference>
<dbReference type="SMR" id="Q8BKU8"/>
<dbReference type="BioGRID" id="215390">
    <property type="interactions" value="3"/>
</dbReference>
<dbReference type="FunCoup" id="Q8BKU8">
    <property type="interactions" value="3391"/>
</dbReference>
<dbReference type="STRING" id="10090.ENSMUSP00000105954"/>
<dbReference type="GlyCosmos" id="Q8BKU8">
    <property type="glycosylation" value="4 sites, No reported glycans"/>
</dbReference>
<dbReference type="GlyGen" id="Q8BKU8">
    <property type="glycosylation" value="5 sites, 1 N-linked glycan (2 sites), 1 O-linked glycan (1 site)"/>
</dbReference>
<dbReference type="iPTMnet" id="Q8BKU8"/>
<dbReference type="PhosphoSitePlus" id="Q8BKU8"/>
<dbReference type="SwissPalm" id="Q8BKU8"/>
<dbReference type="jPOST" id="Q8BKU8"/>
<dbReference type="PaxDb" id="10090-ENSMUSP00000105954"/>
<dbReference type="PeptideAtlas" id="Q8BKU8"/>
<dbReference type="ProteomicsDB" id="260705">
    <molecule id="Q8BKU8-1"/>
</dbReference>
<dbReference type="ProteomicsDB" id="260706">
    <molecule id="Q8BKU8-2"/>
</dbReference>
<dbReference type="ProteomicsDB" id="260707">
    <molecule id="Q8BKU8-3"/>
</dbReference>
<dbReference type="Antibodypedia" id="33259">
    <property type="antibodies" value="64 antibodies from 15 providers"/>
</dbReference>
<dbReference type="Ensembl" id="ENSMUST00000110325.8">
    <molecule id="Q8BKU8-1"/>
    <property type="protein sequence ID" value="ENSMUSP00000105954.2"/>
    <property type="gene ID" value="ENSMUSG00000014353.16"/>
</dbReference>
<dbReference type="GeneID" id="72477"/>
<dbReference type="KEGG" id="mmu:72477"/>
<dbReference type="UCSC" id="uc008mgx.1">
    <molecule id="Q8BKU8-1"/>
    <property type="organism name" value="mouse"/>
</dbReference>
<dbReference type="UCSC" id="uc012cds.1">
    <molecule id="Q8BKU8-3"/>
    <property type="organism name" value="mouse"/>
</dbReference>
<dbReference type="AGR" id="MGI:1919727"/>
<dbReference type="CTD" id="84910"/>
<dbReference type="MGI" id="MGI:1919727">
    <property type="gene designation" value="Tmem87b"/>
</dbReference>
<dbReference type="VEuPathDB" id="HostDB:ENSMUSG00000014353"/>
<dbReference type="eggNOG" id="KOG2568">
    <property type="taxonomic scope" value="Eukaryota"/>
</dbReference>
<dbReference type="GeneTree" id="ENSGT00940000156844"/>
<dbReference type="HOGENOM" id="CLU_027525_1_1_1"/>
<dbReference type="InParanoid" id="Q8BKU8"/>
<dbReference type="OMA" id="RTENCTP"/>
<dbReference type="OrthoDB" id="19932at2759"/>
<dbReference type="PhylomeDB" id="Q8BKU8"/>
<dbReference type="TreeFam" id="TF314452"/>
<dbReference type="BioGRID-ORCS" id="72477">
    <property type="hits" value="2 hits in 80 CRISPR screens"/>
</dbReference>
<dbReference type="ChiTaRS" id="Tmem87b">
    <property type="organism name" value="mouse"/>
</dbReference>
<dbReference type="PRO" id="PR:Q8BKU8"/>
<dbReference type="Proteomes" id="UP000000589">
    <property type="component" value="Chromosome 2"/>
</dbReference>
<dbReference type="RNAct" id="Q8BKU8">
    <property type="molecule type" value="protein"/>
</dbReference>
<dbReference type="Bgee" id="ENSMUSG00000014353">
    <property type="expression patterns" value="Expressed in cumulus cell and 226 other cell types or tissues"/>
</dbReference>
<dbReference type="ExpressionAtlas" id="Q8BKU8">
    <property type="expression patterns" value="baseline and differential"/>
</dbReference>
<dbReference type="GO" id="GO:0005829">
    <property type="term" value="C:cytosol"/>
    <property type="evidence" value="ECO:0007669"/>
    <property type="project" value="GOC"/>
</dbReference>
<dbReference type="GO" id="GO:0000139">
    <property type="term" value="C:Golgi membrane"/>
    <property type="evidence" value="ECO:0007669"/>
    <property type="project" value="UniProtKB-SubCell"/>
</dbReference>
<dbReference type="GO" id="GO:0042147">
    <property type="term" value="P:retrograde transport, endosome to Golgi"/>
    <property type="evidence" value="ECO:0007669"/>
    <property type="project" value="Ensembl"/>
</dbReference>
<dbReference type="InterPro" id="IPR053937">
    <property type="entry name" value="GOST_TM"/>
</dbReference>
<dbReference type="InterPro" id="IPR009637">
    <property type="entry name" value="GPR107/GPR108-like"/>
</dbReference>
<dbReference type="InterPro" id="IPR054101">
    <property type="entry name" value="TMEM87A/B_GOLD"/>
</dbReference>
<dbReference type="PANTHER" id="PTHR21229">
    <property type="entry name" value="LUNG SEVEN TRANSMEMBRANE RECEPTOR"/>
    <property type="match status" value="1"/>
</dbReference>
<dbReference type="PANTHER" id="PTHR21229:SF16">
    <property type="entry name" value="TRANSMEMBRANE PROTEIN 87B"/>
    <property type="match status" value="1"/>
</dbReference>
<dbReference type="Pfam" id="PF06814">
    <property type="entry name" value="GOST_TM"/>
    <property type="match status" value="1"/>
</dbReference>
<dbReference type="Pfam" id="PF21901">
    <property type="entry name" value="TMEM87A-B_GOLD"/>
    <property type="match status" value="1"/>
</dbReference>
<reference key="1">
    <citation type="journal article" date="2005" name="Science">
        <title>The transcriptional landscape of the mammalian genome.</title>
        <authorList>
            <person name="Carninci P."/>
            <person name="Kasukawa T."/>
            <person name="Katayama S."/>
            <person name="Gough J."/>
            <person name="Frith M.C."/>
            <person name="Maeda N."/>
            <person name="Oyama R."/>
            <person name="Ravasi T."/>
            <person name="Lenhard B."/>
            <person name="Wells C."/>
            <person name="Kodzius R."/>
            <person name="Shimokawa K."/>
            <person name="Bajic V.B."/>
            <person name="Brenner S.E."/>
            <person name="Batalov S."/>
            <person name="Forrest A.R."/>
            <person name="Zavolan M."/>
            <person name="Davis M.J."/>
            <person name="Wilming L.G."/>
            <person name="Aidinis V."/>
            <person name="Allen J.E."/>
            <person name="Ambesi-Impiombato A."/>
            <person name="Apweiler R."/>
            <person name="Aturaliya R.N."/>
            <person name="Bailey T.L."/>
            <person name="Bansal M."/>
            <person name="Baxter L."/>
            <person name="Beisel K.W."/>
            <person name="Bersano T."/>
            <person name="Bono H."/>
            <person name="Chalk A.M."/>
            <person name="Chiu K.P."/>
            <person name="Choudhary V."/>
            <person name="Christoffels A."/>
            <person name="Clutterbuck D.R."/>
            <person name="Crowe M.L."/>
            <person name="Dalla E."/>
            <person name="Dalrymple B.P."/>
            <person name="de Bono B."/>
            <person name="Della Gatta G."/>
            <person name="di Bernardo D."/>
            <person name="Down T."/>
            <person name="Engstrom P."/>
            <person name="Fagiolini M."/>
            <person name="Faulkner G."/>
            <person name="Fletcher C.F."/>
            <person name="Fukushima T."/>
            <person name="Furuno M."/>
            <person name="Futaki S."/>
            <person name="Gariboldi M."/>
            <person name="Georgii-Hemming P."/>
            <person name="Gingeras T.R."/>
            <person name="Gojobori T."/>
            <person name="Green R.E."/>
            <person name="Gustincich S."/>
            <person name="Harbers M."/>
            <person name="Hayashi Y."/>
            <person name="Hensch T.K."/>
            <person name="Hirokawa N."/>
            <person name="Hill D."/>
            <person name="Huminiecki L."/>
            <person name="Iacono M."/>
            <person name="Ikeo K."/>
            <person name="Iwama A."/>
            <person name="Ishikawa T."/>
            <person name="Jakt M."/>
            <person name="Kanapin A."/>
            <person name="Katoh M."/>
            <person name="Kawasawa Y."/>
            <person name="Kelso J."/>
            <person name="Kitamura H."/>
            <person name="Kitano H."/>
            <person name="Kollias G."/>
            <person name="Krishnan S.P."/>
            <person name="Kruger A."/>
            <person name="Kummerfeld S.K."/>
            <person name="Kurochkin I.V."/>
            <person name="Lareau L.F."/>
            <person name="Lazarevic D."/>
            <person name="Lipovich L."/>
            <person name="Liu J."/>
            <person name="Liuni S."/>
            <person name="McWilliam S."/>
            <person name="Madan Babu M."/>
            <person name="Madera M."/>
            <person name="Marchionni L."/>
            <person name="Matsuda H."/>
            <person name="Matsuzawa S."/>
            <person name="Miki H."/>
            <person name="Mignone F."/>
            <person name="Miyake S."/>
            <person name="Morris K."/>
            <person name="Mottagui-Tabar S."/>
            <person name="Mulder N."/>
            <person name="Nakano N."/>
            <person name="Nakauchi H."/>
            <person name="Ng P."/>
            <person name="Nilsson R."/>
            <person name="Nishiguchi S."/>
            <person name="Nishikawa S."/>
            <person name="Nori F."/>
            <person name="Ohara O."/>
            <person name="Okazaki Y."/>
            <person name="Orlando V."/>
            <person name="Pang K.C."/>
            <person name="Pavan W.J."/>
            <person name="Pavesi G."/>
            <person name="Pesole G."/>
            <person name="Petrovsky N."/>
            <person name="Piazza S."/>
            <person name="Reed J."/>
            <person name="Reid J.F."/>
            <person name="Ring B.Z."/>
            <person name="Ringwald M."/>
            <person name="Rost B."/>
            <person name="Ruan Y."/>
            <person name="Salzberg S.L."/>
            <person name="Sandelin A."/>
            <person name="Schneider C."/>
            <person name="Schoenbach C."/>
            <person name="Sekiguchi K."/>
            <person name="Semple C.A."/>
            <person name="Seno S."/>
            <person name="Sessa L."/>
            <person name="Sheng Y."/>
            <person name="Shibata Y."/>
            <person name="Shimada H."/>
            <person name="Shimada K."/>
            <person name="Silva D."/>
            <person name="Sinclair B."/>
            <person name="Sperling S."/>
            <person name="Stupka E."/>
            <person name="Sugiura K."/>
            <person name="Sultana R."/>
            <person name="Takenaka Y."/>
            <person name="Taki K."/>
            <person name="Tammoja K."/>
            <person name="Tan S.L."/>
            <person name="Tang S."/>
            <person name="Taylor M.S."/>
            <person name="Tegner J."/>
            <person name="Teichmann S.A."/>
            <person name="Ueda H.R."/>
            <person name="van Nimwegen E."/>
            <person name="Verardo R."/>
            <person name="Wei C.L."/>
            <person name="Yagi K."/>
            <person name="Yamanishi H."/>
            <person name="Zabarovsky E."/>
            <person name="Zhu S."/>
            <person name="Zimmer A."/>
            <person name="Hide W."/>
            <person name="Bult C."/>
            <person name="Grimmond S.M."/>
            <person name="Teasdale R.D."/>
            <person name="Liu E.T."/>
            <person name="Brusic V."/>
            <person name="Quackenbush J."/>
            <person name="Wahlestedt C."/>
            <person name="Mattick J.S."/>
            <person name="Hume D.A."/>
            <person name="Kai C."/>
            <person name="Sasaki D."/>
            <person name="Tomaru Y."/>
            <person name="Fukuda S."/>
            <person name="Kanamori-Katayama M."/>
            <person name="Suzuki M."/>
            <person name="Aoki J."/>
            <person name="Arakawa T."/>
            <person name="Iida J."/>
            <person name="Imamura K."/>
            <person name="Itoh M."/>
            <person name="Kato T."/>
            <person name="Kawaji H."/>
            <person name="Kawagashira N."/>
            <person name="Kawashima T."/>
            <person name="Kojima M."/>
            <person name="Kondo S."/>
            <person name="Konno H."/>
            <person name="Nakano K."/>
            <person name="Ninomiya N."/>
            <person name="Nishio T."/>
            <person name="Okada M."/>
            <person name="Plessy C."/>
            <person name="Shibata K."/>
            <person name="Shiraki T."/>
            <person name="Suzuki S."/>
            <person name="Tagami M."/>
            <person name="Waki K."/>
            <person name="Watahiki A."/>
            <person name="Okamura-Oho Y."/>
            <person name="Suzuki H."/>
            <person name="Kawai J."/>
            <person name="Hayashizaki Y."/>
        </authorList>
    </citation>
    <scope>NUCLEOTIDE SEQUENCE [LARGE SCALE MRNA] (ISOFORMS 1 AND 2)</scope>
    <scope>NUCLEOTIDE SEQUENCE [LARGE SCALE MRNA] OF 15-555 (ISOFORM 3)</scope>
    <source>
        <strain>C57BL/6J</strain>
        <strain>NOD</strain>
        <tissue>Embryo</tissue>
        <tissue>Liver</tissue>
        <tissue>Spleen</tissue>
    </source>
</reference>
<reference key="2">
    <citation type="journal article" date="2009" name="PLoS Biol.">
        <title>Lineage-specific biology revealed by a finished genome assembly of the mouse.</title>
        <authorList>
            <person name="Church D.M."/>
            <person name="Goodstadt L."/>
            <person name="Hillier L.W."/>
            <person name="Zody M.C."/>
            <person name="Goldstein S."/>
            <person name="She X."/>
            <person name="Bult C.J."/>
            <person name="Agarwala R."/>
            <person name="Cherry J.L."/>
            <person name="DiCuccio M."/>
            <person name="Hlavina W."/>
            <person name="Kapustin Y."/>
            <person name="Meric P."/>
            <person name="Maglott D."/>
            <person name="Birtle Z."/>
            <person name="Marques A.C."/>
            <person name="Graves T."/>
            <person name="Zhou S."/>
            <person name="Teague B."/>
            <person name="Potamousis K."/>
            <person name="Churas C."/>
            <person name="Place M."/>
            <person name="Herschleb J."/>
            <person name="Runnheim R."/>
            <person name="Forrest D."/>
            <person name="Amos-Landgraf J."/>
            <person name="Schwartz D.C."/>
            <person name="Cheng Z."/>
            <person name="Lindblad-Toh K."/>
            <person name="Eichler E.E."/>
            <person name="Ponting C.P."/>
        </authorList>
    </citation>
    <scope>NUCLEOTIDE SEQUENCE [LARGE SCALE GENOMIC DNA]</scope>
    <source>
        <strain>C57BL/6J</strain>
    </source>
</reference>
<reference key="3">
    <citation type="journal article" date="2004" name="Genome Res.">
        <title>The status, quality, and expansion of the NIH full-length cDNA project: the Mammalian Gene Collection (MGC).</title>
        <authorList>
            <consortium name="The MGC Project Team"/>
        </authorList>
    </citation>
    <scope>NUCLEOTIDE SEQUENCE [LARGE SCALE MRNA] OF 4-555 (ISOFORM 1)</scope>
    <source>
        <tissue>Mammary tumor</tissue>
    </source>
</reference>
<comment type="function">
    <text evidence="1">May be involved in retrograde transport from endosomes to the trans-Golgi network (TGN).</text>
</comment>
<comment type="subcellular location">
    <subcellularLocation>
        <location evidence="1">Golgi apparatus membrane</location>
        <topology evidence="2">Multi-pass membrane protein</topology>
    </subcellularLocation>
</comment>
<comment type="alternative products">
    <event type="alternative splicing"/>
    <isoform>
        <id>Q8BKU8-1</id>
        <name>1</name>
        <sequence type="displayed"/>
    </isoform>
    <isoform>
        <id>Q8BKU8-2</id>
        <name>2</name>
        <sequence type="described" ref="VSP_026220"/>
    </isoform>
    <isoform>
        <id>Q8BKU8-3</id>
        <name>3</name>
        <sequence type="described" ref="VSP_026221"/>
    </isoform>
</comment>
<comment type="similarity">
    <text evidence="4">Belongs to the LU7TM family. TMEM87 subfamily.</text>
</comment>
<comment type="sequence caution" evidence="4">
    <conflict type="frameshift">
        <sequence resource="EMBL-CDS" id="BAB27940"/>
    </conflict>
</comment>
<organism>
    <name type="scientific">Mus musculus</name>
    <name type="common">Mouse</name>
    <dbReference type="NCBI Taxonomy" id="10090"/>
    <lineage>
        <taxon>Eukaryota</taxon>
        <taxon>Metazoa</taxon>
        <taxon>Chordata</taxon>
        <taxon>Craniata</taxon>
        <taxon>Vertebrata</taxon>
        <taxon>Euteleostomi</taxon>
        <taxon>Mammalia</taxon>
        <taxon>Eutheria</taxon>
        <taxon>Euarchontoglires</taxon>
        <taxon>Glires</taxon>
        <taxon>Rodentia</taxon>
        <taxon>Myomorpha</taxon>
        <taxon>Muroidea</taxon>
        <taxon>Muridae</taxon>
        <taxon>Murinae</taxon>
        <taxon>Mus</taxon>
        <taxon>Mus</taxon>
    </lineage>
</organism>
<evidence type="ECO:0000250" key="1">
    <source>
        <dbReference type="UniProtKB" id="Q96K49"/>
    </source>
</evidence>
<evidence type="ECO:0000255" key="2"/>
<evidence type="ECO:0000303" key="3">
    <source>
    </source>
</evidence>
<evidence type="ECO:0000305" key="4"/>
<evidence type="ECO:0000312" key="5">
    <source>
        <dbReference type="MGI" id="MGI:1919727"/>
    </source>
</evidence>
<proteinExistence type="evidence at transcript level"/>
<sequence>MAAACRSEAGLLPSLLCRRPAGAQLLRVALCLLCWVPAAVDAVPELGLWTRTVNDKSGPLVFRKTMFNSTEIKFSVKSFSCSGPVKFTIEWHLKYHTCHNDYPDLEEELSQRHELHADPDVCAYFKNIDCWTTKSENLDCSSDSQAFPSLNNKELTGIRNISSQEGSTDVVARTQKDGFHIFIVSIKTEKTDAVWDLNVSLSMVGPHGYISASDWPLMIFYMVMCIVYILYGVLWLLWSACYWKDILRIQFWIAAVIFLGMLEKAVFYSEYQNINSTGLSTQGLLIFAELISAVKRTLARLLVIIVSLGYGIVKPRLGTVMHRVIGLGLLYLIFAAIEGVMRVIGGSKHLAVVLTDIVLAVIDSIFVWFIFISLAQTMKTLRLRKNTVKFSLYRHFTNTLIFAVLASIVFMVWTTKTFRIAKCQSDWMELWVDDAFWSFLFSVILIVIMFLWRPSANNQRYAFMPLIDDSDDEVEEFMVTSENLTEGIKLRASKTVSNGTAKPTSDNFDEDLKWVEENIPSSFTDVALPVLVDSDEEIMTRSEIAEKMFSSEKIM</sequence>